<keyword id="KW-1003">Cell membrane</keyword>
<keyword id="KW-0963">Cytoplasm</keyword>
<keyword id="KW-0344">Guanine-nucleotide releasing factor</keyword>
<keyword id="KW-0472">Membrane</keyword>
<keyword id="KW-0597">Phosphoprotein</keyword>
<protein>
    <recommendedName>
        <fullName>Guanine-nucleotide exchange factor YEL1</fullName>
    </recommendedName>
    <alternativeName>
        <fullName>EFA6-like protein 1</fullName>
    </alternativeName>
</protein>
<proteinExistence type="inferred from homology"/>
<comment type="function">
    <text evidence="1">Guanine nucleotide exchange factor for ARF3 required for localization of ARF3 to the bud neck and tip and involved in actin patch polarization.</text>
</comment>
<comment type="subcellular location">
    <subcellularLocation>
        <location evidence="1">Cytoplasm</location>
    </subcellularLocation>
    <subcellularLocation>
        <location evidence="1">Cell membrane</location>
        <topology evidence="1">Peripheral membrane protein</topology>
    </subcellularLocation>
    <subcellularLocation>
        <location evidence="1">Bud neck</location>
    </subcellularLocation>
    <subcellularLocation>
        <location evidence="1">Bud tip</location>
    </subcellularLocation>
    <text evidence="1">Localizes at the cell membrane only at the bud neck and bud tip and this localization is ARF3-dependent.</text>
</comment>
<comment type="similarity">
    <text evidence="5">Belongs to the YEL1 family.</text>
</comment>
<evidence type="ECO:0000250" key="1"/>
<evidence type="ECO:0000250" key="2">
    <source>
        <dbReference type="UniProtKB" id="P34225"/>
    </source>
</evidence>
<evidence type="ECO:0000255" key="3">
    <source>
        <dbReference type="PROSITE-ProRule" id="PRU00189"/>
    </source>
</evidence>
<evidence type="ECO:0000256" key="4">
    <source>
        <dbReference type="SAM" id="MobiDB-lite"/>
    </source>
</evidence>
<evidence type="ECO:0000305" key="5"/>
<gene>
    <name type="primary">YEL1</name>
    <name type="ORF">SCRG_03023</name>
</gene>
<accession>B3LNJ6</accession>
<sequence>MCASLNEVKKNDTYGVSQKGYNDNFSESEGVLHGSKSMPTSMKNMLQSPTMVNMCDILQNKEAANDEKPVIPTTDTATAGTGTEDISSTQSEETDQNSHLIASEILEGTFKDVSYKEYANFLGNDNNNQVLTEFVKLLSPLPSSLLETLFNLSKSIYFIAEAQNIDRILECLSKEWIACHPNTHWKSGYKSCHIVLFSLLILNSDLHNNFQVDHKKIKFSMVAFINNTLRALREENEYEELKIYSREHLIIEELSEYYKTLNETPLPLCTESRTSINTSDNQSSLKRFSTLGSREFSTSNLRSVNSNSTTLYSRDGQVSVREMSAKSNKNFHNNHPMDALYLKESFDDGLITENGSSWFMDDLILISKKSLPRKYSKRDKDQVAAPKTTSKRNKSFFGWLKPSKTTTLIEHASRRTSLSYLNKDSEWERVKIQVKEGRIFIFKIKPDVKDIIQSSETDSATIDYFKDISSSYFAYSLLEAEAHVVQDNIIIGSGAMKSNVCNKNTKRKSGNFTVSFPENINGPKLVLEFQTRSVEEAHKFMDCINFWAGRISPVPLTQFEAVSNAEYGWSDKILTEHASLNLKNIVVSEWKPLLGLELLYEDAKDVEMVELKERLKELMNFTRQLGIWIDKHNEIKDKLVEIWSFDDNYFEAVMNNWNSRYLYMNNQYKKRLSYLKALQKAMGSVQF</sequence>
<reference key="1">
    <citation type="submission" date="2005-03" db="EMBL/GenBank/DDBJ databases">
        <title>Annotation of the Saccharomyces cerevisiae RM11-1a genome.</title>
        <authorList>
            <consortium name="The Broad Institute Genome Sequencing Platform"/>
            <person name="Birren B.W."/>
            <person name="Lander E.S."/>
            <person name="Galagan J.E."/>
            <person name="Nusbaum C."/>
            <person name="Devon K."/>
            <person name="Cuomo C."/>
            <person name="Jaffe D.B."/>
            <person name="Butler J."/>
            <person name="Alvarez P."/>
            <person name="Gnerre S."/>
            <person name="Grabherr M."/>
            <person name="Kleber M."/>
            <person name="Mauceli E.W."/>
            <person name="Brockman W."/>
            <person name="MacCallum I.A."/>
            <person name="Rounsley S."/>
            <person name="Young S.K."/>
            <person name="LaButti K."/>
            <person name="Pushparaj V."/>
            <person name="DeCaprio D."/>
            <person name="Crawford M."/>
            <person name="Koehrsen M."/>
            <person name="Engels R."/>
            <person name="Montgomery P."/>
            <person name="Pearson M."/>
            <person name="Howarth C."/>
            <person name="Larson L."/>
            <person name="Luoma S."/>
            <person name="White J."/>
            <person name="O'Leary S."/>
            <person name="Kodira C.D."/>
            <person name="Zeng Q."/>
            <person name="Yandava C."/>
            <person name="Alvarado L."/>
            <person name="Pratt S."/>
            <person name="Kruglyak L."/>
        </authorList>
    </citation>
    <scope>NUCLEOTIDE SEQUENCE [LARGE SCALE GENOMIC DNA]</scope>
    <source>
        <strain>RM11-1a</strain>
    </source>
</reference>
<feature type="chain" id="PRO_0000404226" description="Guanine-nucleotide exchange factor YEL1">
    <location>
        <begin position="1"/>
        <end position="687"/>
    </location>
</feature>
<feature type="domain" description="SEC7" evidence="3">
    <location>
        <begin position="57"/>
        <end position="264"/>
    </location>
</feature>
<feature type="domain" description="PH">
    <location>
        <begin position="412"/>
        <end position="551"/>
    </location>
</feature>
<feature type="region of interest" description="Disordered" evidence="4">
    <location>
        <begin position="14"/>
        <end position="35"/>
    </location>
</feature>
<feature type="region of interest" description="Disordered" evidence="4">
    <location>
        <begin position="63"/>
        <end position="97"/>
    </location>
</feature>
<feature type="compositionally biased region" description="Polar residues" evidence="4">
    <location>
        <begin position="14"/>
        <end position="27"/>
    </location>
</feature>
<feature type="compositionally biased region" description="Low complexity" evidence="4">
    <location>
        <begin position="73"/>
        <end position="83"/>
    </location>
</feature>
<feature type="modified residue" description="Phosphothreonine" evidence="2">
    <location>
        <position position="290"/>
    </location>
</feature>
<feature type="modified residue" description="Phosphoserine" evidence="2">
    <location>
        <position position="293"/>
    </location>
</feature>
<feature type="modified residue" description="Phosphoserine" evidence="2">
    <location>
        <position position="299"/>
    </location>
</feature>
<organism>
    <name type="scientific">Saccharomyces cerevisiae (strain RM11-1a)</name>
    <name type="common">Baker's yeast</name>
    <dbReference type="NCBI Taxonomy" id="285006"/>
    <lineage>
        <taxon>Eukaryota</taxon>
        <taxon>Fungi</taxon>
        <taxon>Dikarya</taxon>
        <taxon>Ascomycota</taxon>
        <taxon>Saccharomycotina</taxon>
        <taxon>Saccharomycetes</taxon>
        <taxon>Saccharomycetales</taxon>
        <taxon>Saccharomycetaceae</taxon>
        <taxon>Saccharomyces</taxon>
    </lineage>
</organism>
<dbReference type="EMBL" id="CH408048">
    <property type="protein sequence ID" value="EDV12149.1"/>
    <property type="molecule type" value="Genomic_DNA"/>
</dbReference>
<dbReference type="SMR" id="B3LNJ6"/>
<dbReference type="HOGENOM" id="CLU_017717_0_0_1"/>
<dbReference type="OrthoDB" id="24143at4893"/>
<dbReference type="Proteomes" id="UP000008335">
    <property type="component" value="Unassembled WGS sequence"/>
</dbReference>
<dbReference type="GO" id="GO:0005935">
    <property type="term" value="C:cellular bud neck"/>
    <property type="evidence" value="ECO:0007669"/>
    <property type="project" value="UniProtKB-SubCell"/>
</dbReference>
<dbReference type="GO" id="GO:0005934">
    <property type="term" value="C:cellular bud tip"/>
    <property type="evidence" value="ECO:0007669"/>
    <property type="project" value="UniProtKB-SubCell"/>
</dbReference>
<dbReference type="GO" id="GO:0005737">
    <property type="term" value="C:cytoplasm"/>
    <property type="evidence" value="ECO:0007669"/>
    <property type="project" value="UniProtKB-SubCell"/>
</dbReference>
<dbReference type="GO" id="GO:0005886">
    <property type="term" value="C:plasma membrane"/>
    <property type="evidence" value="ECO:0007669"/>
    <property type="project" value="UniProtKB-SubCell"/>
</dbReference>
<dbReference type="GO" id="GO:0005085">
    <property type="term" value="F:guanyl-nucleotide exchange factor activity"/>
    <property type="evidence" value="ECO:0007669"/>
    <property type="project" value="UniProtKB-KW"/>
</dbReference>
<dbReference type="GO" id="GO:0032012">
    <property type="term" value="P:regulation of ARF protein signal transduction"/>
    <property type="evidence" value="ECO:0007669"/>
    <property type="project" value="InterPro"/>
</dbReference>
<dbReference type="Gene3D" id="1.10.1000.11">
    <property type="entry name" value="Arf Nucleotide-binding Site Opener,domain 2"/>
    <property type="match status" value="1"/>
</dbReference>
<dbReference type="InterPro" id="IPR056468">
    <property type="entry name" value="PH_GEF_YEL1"/>
</dbReference>
<dbReference type="InterPro" id="IPR023394">
    <property type="entry name" value="Sec7_C_sf"/>
</dbReference>
<dbReference type="InterPro" id="IPR000904">
    <property type="entry name" value="Sec7_dom"/>
</dbReference>
<dbReference type="InterPro" id="IPR035999">
    <property type="entry name" value="Sec7_dom_sf"/>
</dbReference>
<dbReference type="Pfam" id="PF23633">
    <property type="entry name" value="PH_GEF_YEL1"/>
    <property type="match status" value="1"/>
</dbReference>
<dbReference type="Pfam" id="PF01369">
    <property type="entry name" value="Sec7"/>
    <property type="match status" value="1"/>
</dbReference>
<dbReference type="SMART" id="SM00222">
    <property type="entry name" value="Sec7"/>
    <property type="match status" value="1"/>
</dbReference>
<dbReference type="SUPFAM" id="SSF48425">
    <property type="entry name" value="Sec7 domain"/>
    <property type="match status" value="1"/>
</dbReference>
<dbReference type="PROSITE" id="PS50190">
    <property type="entry name" value="SEC7"/>
    <property type="match status" value="1"/>
</dbReference>
<name>YEL1_YEAS1</name>